<comment type="function">
    <text evidence="1">Catalyzes the reversible conversion of 2-phosphoglycerate (2-PG) into phosphoenolpyruvate (PEP). It is essential for the degradation of carbohydrates via glycolysis.</text>
</comment>
<comment type="catalytic activity">
    <reaction evidence="1">
        <text>(2R)-2-phosphoglycerate = phosphoenolpyruvate + H2O</text>
        <dbReference type="Rhea" id="RHEA:10164"/>
        <dbReference type="ChEBI" id="CHEBI:15377"/>
        <dbReference type="ChEBI" id="CHEBI:58289"/>
        <dbReference type="ChEBI" id="CHEBI:58702"/>
        <dbReference type="EC" id="4.2.1.11"/>
    </reaction>
</comment>
<comment type="cofactor">
    <cofactor evidence="1">
        <name>Mg(2+)</name>
        <dbReference type="ChEBI" id="CHEBI:18420"/>
    </cofactor>
    <text evidence="1">Binds a second Mg(2+) ion via substrate during catalysis.</text>
</comment>
<comment type="pathway">
    <text evidence="1">Carbohydrate degradation; glycolysis; pyruvate from D-glyceraldehyde 3-phosphate: step 4/5.</text>
</comment>
<comment type="subcellular location">
    <subcellularLocation>
        <location evidence="1">Cytoplasm</location>
    </subcellularLocation>
    <subcellularLocation>
        <location evidence="1">Secreted</location>
    </subcellularLocation>
    <subcellularLocation>
        <location evidence="1">Cell surface</location>
    </subcellularLocation>
    <text evidence="1">Fractions of enolase are present in both the cytoplasm and on the cell surface.</text>
</comment>
<comment type="similarity">
    <text evidence="1">Belongs to the enolase family.</text>
</comment>
<gene>
    <name evidence="1" type="primary">eno</name>
    <name type="ordered locus">STK_12120</name>
</gene>
<organism>
    <name type="scientific">Sulfurisphaera tokodaii (strain DSM 16993 / JCM 10545 / NBRC 100140 / 7)</name>
    <name type="common">Sulfolobus tokodaii</name>
    <dbReference type="NCBI Taxonomy" id="273063"/>
    <lineage>
        <taxon>Archaea</taxon>
        <taxon>Thermoproteota</taxon>
        <taxon>Thermoprotei</taxon>
        <taxon>Sulfolobales</taxon>
        <taxon>Sulfolobaceae</taxon>
        <taxon>Sulfurisphaera</taxon>
    </lineage>
</organism>
<reference key="1">
    <citation type="journal article" date="2001" name="DNA Res.">
        <title>Complete genome sequence of an aerobic thermoacidophilic Crenarchaeon, Sulfolobus tokodaii strain7.</title>
        <authorList>
            <person name="Kawarabayasi Y."/>
            <person name="Hino Y."/>
            <person name="Horikawa H."/>
            <person name="Jin-no K."/>
            <person name="Takahashi M."/>
            <person name="Sekine M."/>
            <person name="Baba S."/>
            <person name="Ankai A."/>
            <person name="Kosugi H."/>
            <person name="Hosoyama A."/>
            <person name="Fukui S."/>
            <person name="Nagai Y."/>
            <person name="Nishijima K."/>
            <person name="Otsuka R."/>
            <person name="Nakazawa H."/>
            <person name="Takamiya M."/>
            <person name="Kato Y."/>
            <person name="Yoshizawa T."/>
            <person name="Tanaka T."/>
            <person name="Kudoh Y."/>
            <person name="Yamazaki J."/>
            <person name="Kushida N."/>
            <person name="Oguchi A."/>
            <person name="Aoki K."/>
            <person name="Masuda S."/>
            <person name="Yanagii M."/>
            <person name="Nishimura M."/>
            <person name="Yamagishi A."/>
            <person name="Oshima T."/>
            <person name="Kikuchi H."/>
        </authorList>
    </citation>
    <scope>NUCLEOTIDE SEQUENCE [LARGE SCALE GENOMIC DNA]</scope>
    <source>
        <strain>DSM 16993 / JCM 10545 / NBRC 100140 / 7</strain>
    </source>
</reference>
<evidence type="ECO:0000255" key="1">
    <source>
        <dbReference type="HAMAP-Rule" id="MF_00318"/>
    </source>
</evidence>
<proteinExistence type="inferred from homology"/>
<accession>Q972B6</accession>
<protein>
    <recommendedName>
        <fullName evidence="1">Enolase</fullName>
        <ecNumber evidence="1">4.2.1.11</ecNumber>
    </recommendedName>
    <alternativeName>
        <fullName evidence="1">2-phospho-D-glycerate hydro-lyase</fullName>
    </alternativeName>
    <alternativeName>
        <fullName evidence="1">2-phosphoglycerate dehydratase</fullName>
    </alternativeName>
</protein>
<feature type="chain" id="PRO_0000134036" description="Enolase">
    <location>
        <begin position="1"/>
        <end position="416"/>
    </location>
</feature>
<feature type="active site" description="Proton donor" evidence="1">
    <location>
        <position position="204"/>
    </location>
</feature>
<feature type="active site" description="Proton acceptor" evidence="1">
    <location>
        <position position="331"/>
    </location>
</feature>
<feature type="binding site" evidence="1">
    <location>
        <position position="160"/>
    </location>
    <ligand>
        <name>(2R)-2-phosphoglycerate</name>
        <dbReference type="ChEBI" id="CHEBI:58289"/>
    </ligand>
</feature>
<feature type="binding site" evidence="1">
    <location>
        <position position="239"/>
    </location>
    <ligand>
        <name>Mg(2+)</name>
        <dbReference type="ChEBI" id="CHEBI:18420"/>
    </ligand>
</feature>
<feature type="binding site" evidence="1">
    <location>
        <position position="280"/>
    </location>
    <ligand>
        <name>Mg(2+)</name>
        <dbReference type="ChEBI" id="CHEBI:18420"/>
    </ligand>
</feature>
<feature type="binding site" evidence="1">
    <location>
        <position position="306"/>
    </location>
    <ligand>
        <name>Mg(2+)</name>
        <dbReference type="ChEBI" id="CHEBI:18420"/>
    </ligand>
</feature>
<feature type="binding site" evidence="1">
    <location>
        <position position="331"/>
    </location>
    <ligand>
        <name>(2R)-2-phosphoglycerate</name>
        <dbReference type="ChEBI" id="CHEBI:58289"/>
    </ligand>
</feature>
<feature type="binding site" evidence="1">
    <location>
        <position position="360"/>
    </location>
    <ligand>
        <name>(2R)-2-phosphoglycerate</name>
        <dbReference type="ChEBI" id="CHEBI:58289"/>
    </ligand>
</feature>
<feature type="binding site" evidence="1">
    <location>
        <position position="361"/>
    </location>
    <ligand>
        <name>(2R)-2-phosphoglycerate</name>
        <dbReference type="ChEBI" id="CHEBI:58289"/>
    </ligand>
</feature>
<feature type="binding site" evidence="1">
    <location>
        <position position="382"/>
    </location>
    <ligand>
        <name>(2R)-2-phosphoglycerate</name>
        <dbReference type="ChEBI" id="CHEBI:58289"/>
    </ligand>
</feature>
<dbReference type="EC" id="4.2.1.11" evidence="1"/>
<dbReference type="EMBL" id="BA000023">
    <property type="protein sequence ID" value="BAB66253.1"/>
    <property type="molecule type" value="Genomic_DNA"/>
</dbReference>
<dbReference type="RefSeq" id="WP_010979231.1">
    <property type="nucleotide sequence ID" value="NC_003106.2"/>
</dbReference>
<dbReference type="SMR" id="Q972B6"/>
<dbReference type="STRING" id="273063.STK_12120"/>
<dbReference type="GeneID" id="1459210"/>
<dbReference type="KEGG" id="sto:STK_12120"/>
<dbReference type="PATRIC" id="fig|273063.9.peg.1368"/>
<dbReference type="eggNOG" id="arCOG01169">
    <property type="taxonomic scope" value="Archaea"/>
</dbReference>
<dbReference type="OrthoDB" id="8680at2157"/>
<dbReference type="UniPathway" id="UPA00109">
    <property type="reaction ID" value="UER00187"/>
</dbReference>
<dbReference type="Proteomes" id="UP000001015">
    <property type="component" value="Chromosome"/>
</dbReference>
<dbReference type="GO" id="GO:0009986">
    <property type="term" value="C:cell surface"/>
    <property type="evidence" value="ECO:0007669"/>
    <property type="project" value="UniProtKB-SubCell"/>
</dbReference>
<dbReference type="GO" id="GO:0005576">
    <property type="term" value="C:extracellular region"/>
    <property type="evidence" value="ECO:0007669"/>
    <property type="project" value="UniProtKB-SubCell"/>
</dbReference>
<dbReference type="GO" id="GO:0000015">
    <property type="term" value="C:phosphopyruvate hydratase complex"/>
    <property type="evidence" value="ECO:0007669"/>
    <property type="project" value="InterPro"/>
</dbReference>
<dbReference type="GO" id="GO:0000287">
    <property type="term" value="F:magnesium ion binding"/>
    <property type="evidence" value="ECO:0007669"/>
    <property type="project" value="UniProtKB-UniRule"/>
</dbReference>
<dbReference type="GO" id="GO:0004634">
    <property type="term" value="F:phosphopyruvate hydratase activity"/>
    <property type="evidence" value="ECO:0007669"/>
    <property type="project" value="UniProtKB-UniRule"/>
</dbReference>
<dbReference type="GO" id="GO:0006096">
    <property type="term" value="P:glycolytic process"/>
    <property type="evidence" value="ECO:0007669"/>
    <property type="project" value="UniProtKB-UniRule"/>
</dbReference>
<dbReference type="CDD" id="cd03313">
    <property type="entry name" value="enolase"/>
    <property type="match status" value="1"/>
</dbReference>
<dbReference type="Gene3D" id="3.20.20.120">
    <property type="entry name" value="Enolase-like C-terminal domain"/>
    <property type="match status" value="1"/>
</dbReference>
<dbReference type="Gene3D" id="3.30.390.10">
    <property type="entry name" value="Enolase-like, N-terminal domain"/>
    <property type="match status" value="1"/>
</dbReference>
<dbReference type="HAMAP" id="MF_00318">
    <property type="entry name" value="Enolase"/>
    <property type="match status" value="1"/>
</dbReference>
<dbReference type="InterPro" id="IPR000941">
    <property type="entry name" value="Enolase"/>
</dbReference>
<dbReference type="InterPro" id="IPR036849">
    <property type="entry name" value="Enolase-like_C_sf"/>
</dbReference>
<dbReference type="InterPro" id="IPR029017">
    <property type="entry name" value="Enolase-like_N"/>
</dbReference>
<dbReference type="InterPro" id="IPR020810">
    <property type="entry name" value="Enolase_C"/>
</dbReference>
<dbReference type="InterPro" id="IPR020809">
    <property type="entry name" value="Enolase_CS"/>
</dbReference>
<dbReference type="InterPro" id="IPR020811">
    <property type="entry name" value="Enolase_N"/>
</dbReference>
<dbReference type="NCBIfam" id="TIGR01060">
    <property type="entry name" value="eno"/>
    <property type="match status" value="1"/>
</dbReference>
<dbReference type="PANTHER" id="PTHR11902">
    <property type="entry name" value="ENOLASE"/>
    <property type="match status" value="1"/>
</dbReference>
<dbReference type="PANTHER" id="PTHR11902:SF1">
    <property type="entry name" value="ENOLASE"/>
    <property type="match status" value="1"/>
</dbReference>
<dbReference type="Pfam" id="PF00113">
    <property type="entry name" value="Enolase_C"/>
    <property type="match status" value="1"/>
</dbReference>
<dbReference type="Pfam" id="PF03952">
    <property type="entry name" value="Enolase_N"/>
    <property type="match status" value="1"/>
</dbReference>
<dbReference type="PIRSF" id="PIRSF001400">
    <property type="entry name" value="Enolase"/>
    <property type="match status" value="1"/>
</dbReference>
<dbReference type="PRINTS" id="PR00148">
    <property type="entry name" value="ENOLASE"/>
</dbReference>
<dbReference type="SFLD" id="SFLDS00001">
    <property type="entry name" value="Enolase"/>
    <property type="match status" value="1"/>
</dbReference>
<dbReference type="SFLD" id="SFLDF00002">
    <property type="entry name" value="enolase"/>
    <property type="match status" value="1"/>
</dbReference>
<dbReference type="SMART" id="SM01192">
    <property type="entry name" value="Enolase_C"/>
    <property type="match status" value="1"/>
</dbReference>
<dbReference type="SMART" id="SM01193">
    <property type="entry name" value="Enolase_N"/>
    <property type="match status" value="1"/>
</dbReference>
<dbReference type="SUPFAM" id="SSF51604">
    <property type="entry name" value="Enolase C-terminal domain-like"/>
    <property type="match status" value="1"/>
</dbReference>
<dbReference type="SUPFAM" id="SSF54826">
    <property type="entry name" value="Enolase N-terminal domain-like"/>
    <property type="match status" value="1"/>
</dbReference>
<dbReference type="PROSITE" id="PS00164">
    <property type="entry name" value="ENOLASE"/>
    <property type="match status" value="1"/>
</dbReference>
<keyword id="KW-0963">Cytoplasm</keyword>
<keyword id="KW-0324">Glycolysis</keyword>
<keyword id="KW-0456">Lyase</keyword>
<keyword id="KW-0460">Magnesium</keyword>
<keyword id="KW-0479">Metal-binding</keyword>
<keyword id="KW-1185">Reference proteome</keyword>
<keyword id="KW-0964">Secreted</keyword>
<sequence length="416" mass="46305">MNDYFRIKKIKGYQILDSRGNKTIRVKIETYGGISETGDAPAGASKGSREAIELRDKDGGVTRAVELVNTLINDSLRDFDVRNQLGIDQTLIRMDGTPNKSRVGGNTTIATSIAVAKTAAKAMGLEIFQYIGGPRVRYLPIPLLNILNGGLHAGNELKIQEFIIIPLSFDSFHEALYAADEVYKQLKGIITEKYGKLYTMLGDEGGVAPPLSKTEDALDLVYTAIKNSGYEDKIVMGIDAASSDFFNGSQYEIDGKKLSPDEMIDYYIQLASRYPLLYIEDPFNENDFERFSILQQKLKKTIVTGDDLFTTNIEYLKKGIEKSSAKGTIVKPNQIGTLSETFEYIEFAKKNSIKIIVSHRSGETEDSFIADLAVGVQSDFIKTGAPARGERTSKYNRLLEIENDYGIEYYGKKIYL</sequence>
<name>ENO_SULTO</name>